<accession>B8ZQU0</accession>
<feature type="chain" id="PRO_0000377226" description="tRNA dimethylallyltransferase">
    <location>
        <begin position="1"/>
        <end position="311"/>
    </location>
</feature>
<feature type="binding site" evidence="1">
    <location>
        <begin position="8"/>
        <end position="15"/>
    </location>
    <ligand>
        <name>ATP</name>
        <dbReference type="ChEBI" id="CHEBI:30616"/>
    </ligand>
</feature>
<feature type="binding site" evidence="1">
    <location>
        <begin position="10"/>
        <end position="15"/>
    </location>
    <ligand>
        <name>substrate</name>
    </ligand>
</feature>
<feature type="site" description="Interaction with substrate tRNA" evidence="1">
    <location>
        <position position="103"/>
    </location>
</feature>
<feature type="site" description="Interaction with substrate tRNA" evidence="1">
    <location>
        <position position="124"/>
    </location>
</feature>
<reference key="1">
    <citation type="journal article" date="2009" name="Nat. Genet.">
        <title>Comparative genomic and phylogeographic analysis of Mycobacterium leprae.</title>
        <authorList>
            <person name="Monot M."/>
            <person name="Honore N."/>
            <person name="Garnier T."/>
            <person name="Zidane N."/>
            <person name="Sherafi D."/>
            <person name="Paniz-Mondolfi A."/>
            <person name="Matsuoka M."/>
            <person name="Taylor G.M."/>
            <person name="Donoghue H.D."/>
            <person name="Bouwman A."/>
            <person name="Mays S."/>
            <person name="Watson C."/>
            <person name="Lockwood D."/>
            <person name="Khamispour A."/>
            <person name="Dowlati Y."/>
            <person name="Jianping S."/>
            <person name="Rea T.H."/>
            <person name="Vera-Cabrera L."/>
            <person name="Stefani M.M."/>
            <person name="Banu S."/>
            <person name="Macdonald M."/>
            <person name="Sapkota B.R."/>
            <person name="Spencer J.S."/>
            <person name="Thomas J."/>
            <person name="Harshman K."/>
            <person name="Singh P."/>
            <person name="Busso P."/>
            <person name="Gattiker A."/>
            <person name="Rougemont J."/>
            <person name="Brennan P.J."/>
            <person name="Cole S.T."/>
        </authorList>
    </citation>
    <scope>NUCLEOTIDE SEQUENCE [LARGE SCALE GENOMIC DNA]</scope>
    <source>
        <strain>Br4923</strain>
    </source>
</reference>
<organism>
    <name type="scientific">Mycobacterium leprae (strain Br4923)</name>
    <dbReference type="NCBI Taxonomy" id="561304"/>
    <lineage>
        <taxon>Bacteria</taxon>
        <taxon>Bacillati</taxon>
        <taxon>Actinomycetota</taxon>
        <taxon>Actinomycetes</taxon>
        <taxon>Mycobacteriales</taxon>
        <taxon>Mycobacteriaceae</taxon>
        <taxon>Mycobacterium</taxon>
    </lineage>
</organism>
<keyword id="KW-0067">ATP-binding</keyword>
<keyword id="KW-0460">Magnesium</keyword>
<keyword id="KW-0547">Nucleotide-binding</keyword>
<keyword id="KW-0808">Transferase</keyword>
<keyword id="KW-0819">tRNA processing</keyword>
<proteinExistence type="inferred from homology"/>
<name>MIAA_MYCLB</name>
<protein>
    <recommendedName>
        <fullName evidence="1">tRNA dimethylallyltransferase</fullName>
        <ecNumber evidence="1">2.5.1.75</ecNumber>
    </recommendedName>
    <alternativeName>
        <fullName evidence="1">Dimethylallyl diphosphate:tRNA dimethylallyltransferase</fullName>
        <shortName evidence="1">DMAPP:tRNA dimethylallyltransferase</shortName>
        <shortName evidence="1">DMATase</shortName>
    </alternativeName>
    <alternativeName>
        <fullName evidence="1">Isopentenyl-diphosphate:tRNA isopentenyltransferase</fullName>
        <shortName evidence="1">IPP transferase</shortName>
        <shortName evidence="1">IPPT</shortName>
        <shortName evidence="1">IPTase</shortName>
    </alternativeName>
</protein>
<gene>
    <name evidence="1" type="primary">miaA</name>
    <name type="ordered locus">MLBr00995</name>
</gene>
<evidence type="ECO:0000255" key="1">
    <source>
        <dbReference type="HAMAP-Rule" id="MF_00185"/>
    </source>
</evidence>
<comment type="function">
    <text evidence="1">Catalyzes the transfer of a dimethylallyl group onto the adenine at position 37 in tRNAs that read codons beginning with uridine, leading to the formation of N6-(dimethylallyl)adenosine (i(6)A).</text>
</comment>
<comment type="catalytic activity">
    <reaction evidence="1">
        <text>adenosine(37) in tRNA + dimethylallyl diphosphate = N(6)-dimethylallyladenosine(37) in tRNA + diphosphate</text>
        <dbReference type="Rhea" id="RHEA:26482"/>
        <dbReference type="Rhea" id="RHEA-COMP:10162"/>
        <dbReference type="Rhea" id="RHEA-COMP:10375"/>
        <dbReference type="ChEBI" id="CHEBI:33019"/>
        <dbReference type="ChEBI" id="CHEBI:57623"/>
        <dbReference type="ChEBI" id="CHEBI:74411"/>
        <dbReference type="ChEBI" id="CHEBI:74415"/>
        <dbReference type="EC" id="2.5.1.75"/>
    </reaction>
</comment>
<comment type="cofactor">
    <cofactor evidence="1">
        <name>Mg(2+)</name>
        <dbReference type="ChEBI" id="CHEBI:18420"/>
    </cofactor>
</comment>
<comment type="subunit">
    <text evidence="1">Monomer.</text>
</comment>
<comment type="similarity">
    <text evidence="1">Belongs to the IPP transferase family.</text>
</comment>
<sequence length="311" mass="34054">MRPLAIVGPTGVGKSELALDVIERLGGQVSVEIVNADAMQLYRGMDIGTAKLPVAARRGIPHHQLDVLDVTETATVASYQRTAAADIEAIAARGAVPVVVGGSMLYVQSLLDDWSFPGTDPAVRVRWEQQLAEVGVVRLHAELARRDLAAAAAILPTDGRRTVRALEVVELTGKPFAASAPRIGAPRWDTVIVGLDCDRTILSERLARRIDSMFGQGLVDEVRMLLRWGLRDGVTASRALGYAQVLTALDAGGDADHLDEARQQTYLGHRRYARRQRSWFHRDHRVHWLDVGTVDRVGVVDDALRVWRNAS</sequence>
<dbReference type="EC" id="2.5.1.75" evidence="1"/>
<dbReference type="EMBL" id="FM211192">
    <property type="protein sequence ID" value="CAR71090.1"/>
    <property type="molecule type" value="Genomic_DNA"/>
</dbReference>
<dbReference type="SMR" id="B8ZQU0"/>
<dbReference type="KEGG" id="mlb:MLBr00995"/>
<dbReference type="HOGENOM" id="CLU_032616_0_1_11"/>
<dbReference type="Proteomes" id="UP000006900">
    <property type="component" value="Chromosome"/>
</dbReference>
<dbReference type="GO" id="GO:0005524">
    <property type="term" value="F:ATP binding"/>
    <property type="evidence" value="ECO:0007669"/>
    <property type="project" value="UniProtKB-UniRule"/>
</dbReference>
<dbReference type="GO" id="GO:0052381">
    <property type="term" value="F:tRNA dimethylallyltransferase activity"/>
    <property type="evidence" value="ECO:0007669"/>
    <property type="project" value="UniProtKB-UniRule"/>
</dbReference>
<dbReference type="GO" id="GO:0006400">
    <property type="term" value="P:tRNA modification"/>
    <property type="evidence" value="ECO:0007669"/>
    <property type="project" value="TreeGrafter"/>
</dbReference>
<dbReference type="FunFam" id="1.10.20.140:FF:000001">
    <property type="entry name" value="tRNA dimethylallyltransferase"/>
    <property type="match status" value="1"/>
</dbReference>
<dbReference type="Gene3D" id="1.10.20.140">
    <property type="match status" value="1"/>
</dbReference>
<dbReference type="Gene3D" id="3.40.50.300">
    <property type="entry name" value="P-loop containing nucleotide triphosphate hydrolases"/>
    <property type="match status" value="1"/>
</dbReference>
<dbReference type="HAMAP" id="MF_00185">
    <property type="entry name" value="IPP_trans"/>
    <property type="match status" value="1"/>
</dbReference>
<dbReference type="InterPro" id="IPR039657">
    <property type="entry name" value="Dimethylallyltransferase"/>
</dbReference>
<dbReference type="InterPro" id="IPR018022">
    <property type="entry name" value="IPT"/>
</dbReference>
<dbReference type="InterPro" id="IPR027417">
    <property type="entry name" value="P-loop_NTPase"/>
</dbReference>
<dbReference type="NCBIfam" id="TIGR00174">
    <property type="entry name" value="miaA"/>
    <property type="match status" value="1"/>
</dbReference>
<dbReference type="PANTHER" id="PTHR11088">
    <property type="entry name" value="TRNA DIMETHYLALLYLTRANSFERASE"/>
    <property type="match status" value="1"/>
</dbReference>
<dbReference type="PANTHER" id="PTHR11088:SF60">
    <property type="entry name" value="TRNA DIMETHYLALLYLTRANSFERASE"/>
    <property type="match status" value="1"/>
</dbReference>
<dbReference type="Pfam" id="PF01715">
    <property type="entry name" value="IPPT"/>
    <property type="match status" value="1"/>
</dbReference>
<dbReference type="SUPFAM" id="SSF52540">
    <property type="entry name" value="P-loop containing nucleoside triphosphate hydrolases"/>
    <property type="match status" value="1"/>
</dbReference>